<organism>
    <name type="scientific">Streptococcus suis (strain 05ZYH33)</name>
    <dbReference type="NCBI Taxonomy" id="391295"/>
    <lineage>
        <taxon>Bacteria</taxon>
        <taxon>Bacillati</taxon>
        <taxon>Bacillota</taxon>
        <taxon>Bacilli</taxon>
        <taxon>Lactobacillales</taxon>
        <taxon>Streptococcaceae</taxon>
        <taxon>Streptococcus</taxon>
    </lineage>
</organism>
<proteinExistence type="inferred from homology"/>
<comment type="subcellular location">
    <subcellularLocation>
        <location evidence="1">Cell membrane</location>
        <topology evidence="1">Multi-pass membrane protein</topology>
    </subcellularLocation>
</comment>
<comment type="similarity">
    <text evidence="1">Belongs to the UPF0397 family.</text>
</comment>
<protein>
    <recommendedName>
        <fullName evidence="1">UPF0397 protein SSU05_0404</fullName>
    </recommendedName>
</protein>
<feature type="chain" id="PRO_1000069204" description="UPF0397 protein SSU05_0404">
    <location>
        <begin position="1"/>
        <end position="181"/>
    </location>
</feature>
<feature type="transmembrane region" description="Helical" evidence="1">
    <location>
        <begin position="9"/>
        <end position="29"/>
    </location>
</feature>
<feature type="transmembrane region" description="Helical" evidence="1">
    <location>
        <begin position="46"/>
        <end position="66"/>
    </location>
</feature>
<feature type="transmembrane region" description="Helical" evidence="1">
    <location>
        <begin position="70"/>
        <end position="90"/>
    </location>
</feature>
<feature type="transmembrane region" description="Helical" evidence="1">
    <location>
        <begin position="108"/>
        <end position="128"/>
    </location>
</feature>
<feature type="transmembrane region" description="Helical" evidence="1">
    <location>
        <begin position="147"/>
        <end position="167"/>
    </location>
</feature>
<name>Y404_STRSY</name>
<keyword id="KW-1003">Cell membrane</keyword>
<keyword id="KW-0472">Membrane</keyword>
<keyword id="KW-0812">Transmembrane</keyword>
<keyword id="KW-1133">Transmembrane helix</keyword>
<dbReference type="EMBL" id="CP000407">
    <property type="protein sequence ID" value="ABP89371.1"/>
    <property type="molecule type" value="Genomic_DNA"/>
</dbReference>
<dbReference type="STRING" id="391295.SSU05_0404"/>
<dbReference type="KEGG" id="ssu:SSU05_0404"/>
<dbReference type="eggNOG" id="COG4720">
    <property type="taxonomic scope" value="Bacteria"/>
</dbReference>
<dbReference type="HOGENOM" id="CLU_120023_0_0_9"/>
<dbReference type="BioCyc" id="SSUI391295:GHI8-440-MONOMER"/>
<dbReference type="GO" id="GO:0005886">
    <property type="term" value="C:plasma membrane"/>
    <property type="evidence" value="ECO:0007669"/>
    <property type="project" value="UniProtKB-SubCell"/>
</dbReference>
<dbReference type="Gene3D" id="1.10.1760.20">
    <property type="match status" value="1"/>
</dbReference>
<dbReference type="HAMAP" id="MF_01572">
    <property type="entry name" value="UPF0397"/>
    <property type="match status" value="1"/>
</dbReference>
<dbReference type="InterPro" id="IPR009825">
    <property type="entry name" value="ECF_substrate-spec-like"/>
</dbReference>
<dbReference type="InterPro" id="IPR022914">
    <property type="entry name" value="UPF0397"/>
</dbReference>
<dbReference type="NCBIfam" id="NF010182">
    <property type="entry name" value="PRK13661.1"/>
    <property type="match status" value="1"/>
</dbReference>
<dbReference type="PANTHER" id="PTHR37815">
    <property type="entry name" value="UPF0397 PROTEIN BC_2624-RELATED"/>
    <property type="match status" value="1"/>
</dbReference>
<dbReference type="PANTHER" id="PTHR37815:SF3">
    <property type="entry name" value="UPF0397 PROTEIN SPR0429"/>
    <property type="match status" value="1"/>
</dbReference>
<dbReference type="Pfam" id="PF07155">
    <property type="entry name" value="ECF-ribofla_trS"/>
    <property type="match status" value="1"/>
</dbReference>
<sequence length="181" mass="19227">MKNNSIKTVVATGIGAALFVVIGHLINIPTFVPNTSIQLQYAVQSLLAVVFGPVVGFLVGFIGHTLKDSLTYGPWWSWILASGVFGLVVGLTKKRLRIQEGIFEGKDILFFNLVQIAANVLAWGVIAPVLDILIYSEAANKVFAQGLVAGIANSITIAIAGTLLLVVYAKSQTKTGSLSKD</sequence>
<accession>A4VTD2</accession>
<gene>
    <name type="ordered locus">SSU05_0404</name>
</gene>
<reference key="1">
    <citation type="journal article" date="2007" name="PLoS ONE">
        <title>A glimpse of streptococcal toxic shock syndrome from comparative genomics of S. suis 2 Chinese isolates.</title>
        <authorList>
            <person name="Chen C."/>
            <person name="Tang J."/>
            <person name="Dong W."/>
            <person name="Wang C."/>
            <person name="Feng Y."/>
            <person name="Wang J."/>
            <person name="Zheng F."/>
            <person name="Pan X."/>
            <person name="Liu D."/>
            <person name="Li M."/>
            <person name="Song Y."/>
            <person name="Zhu X."/>
            <person name="Sun H."/>
            <person name="Feng T."/>
            <person name="Guo Z."/>
            <person name="Ju A."/>
            <person name="Ge J."/>
            <person name="Dong Y."/>
            <person name="Sun W."/>
            <person name="Jiang Y."/>
            <person name="Wang J."/>
            <person name="Yan J."/>
            <person name="Yang H."/>
            <person name="Wang X."/>
            <person name="Gao G.F."/>
            <person name="Yang R."/>
            <person name="Wang J."/>
            <person name="Yu J."/>
        </authorList>
    </citation>
    <scope>NUCLEOTIDE SEQUENCE [LARGE SCALE GENOMIC DNA]</scope>
    <source>
        <strain>05ZYH33</strain>
    </source>
</reference>
<evidence type="ECO:0000255" key="1">
    <source>
        <dbReference type="HAMAP-Rule" id="MF_01572"/>
    </source>
</evidence>